<feature type="chain" id="PRO_1000116345" description="Argininosuccinate lyase">
    <location>
        <begin position="1"/>
        <end position="457"/>
    </location>
</feature>
<organism>
    <name type="scientific">Staphylococcus carnosus (strain TM300)</name>
    <dbReference type="NCBI Taxonomy" id="396513"/>
    <lineage>
        <taxon>Bacteria</taxon>
        <taxon>Bacillati</taxon>
        <taxon>Bacillota</taxon>
        <taxon>Bacilli</taxon>
        <taxon>Bacillales</taxon>
        <taxon>Staphylococcaceae</taxon>
        <taxon>Staphylococcus</taxon>
    </lineage>
</organism>
<sequence>MSNKAWGGRFQSEPEAWVDAFNASINFDHLLIDEDIQGSIAHATMLAQQGILTEDESNTIIKGLQEIQQDYHDGKIEFTEALEDIHLNIEHELIERIGAVGGKLHTGRSRNDQVATDLHLYTKKAVKEIIHLIHTLQETIVKLADDHVDTIMPGYTHLQRAQPISFAHHVMTYFWMLERDKNRFEDALKRIDINPLGAAALSGTTHPIDRAKTQELLDFAALYENSLDAVSDRDFVVETLNDISLVMIHLSRFSEEIIFWSSDEAKFITLSDSFSTGSSIMPQKKNPDMAELIRGKTGRTTGHLMSMLMTLKGLPLAYNKDMQEDKEGLFDAVHTVTGSLRIFEGMLASLTVNTDRLNETVHQDFSNATELADYLVEKDVPFREAHAIVGQIVYWCIQHDCYLLDVPLEKYQEFSSSIDDTIYSYLKPENCLKRRKSYGSTGQESVRHQIKVAKDLL</sequence>
<keyword id="KW-0028">Amino-acid biosynthesis</keyword>
<keyword id="KW-0055">Arginine biosynthesis</keyword>
<keyword id="KW-0963">Cytoplasm</keyword>
<keyword id="KW-0456">Lyase</keyword>
<keyword id="KW-1185">Reference proteome</keyword>
<comment type="catalytic activity">
    <reaction evidence="1">
        <text>2-(N(omega)-L-arginino)succinate = fumarate + L-arginine</text>
        <dbReference type="Rhea" id="RHEA:24020"/>
        <dbReference type="ChEBI" id="CHEBI:29806"/>
        <dbReference type="ChEBI" id="CHEBI:32682"/>
        <dbReference type="ChEBI" id="CHEBI:57472"/>
        <dbReference type="EC" id="4.3.2.1"/>
    </reaction>
</comment>
<comment type="pathway">
    <text evidence="1">Amino-acid biosynthesis; L-arginine biosynthesis; L-arginine from L-ornithine and carbamoyl phosphate: step 3/3.</text>
</comment>
<comment type="subcellular location">
    <subcellularLocation>
        <location evidence="1">Cytoplasm</location>
    </subcellularLocation>
</comment>
<comment type="similarity">
    <text evidence="1">Belongs to the lyase 1 family. Argininosuccinate lyase subfamily.</text>
</comment>
<reference key="1">
    <citation type="journal article" date="2009" name="Appl. Environ. Microbiol.">
        <title>Genome analysis of the meat starter culture bacterium Staphylococcus carnosus TM300.</title>
        <authorList>
            <person name="Rosenstein R."/>
            <person name="Nerz C."/>
            <person name="Biswas L."/>
            <person name="Resch A."/>
            <person name="Raddatz G."/>
            <person name="Schuster S.C."/>
            <person name="Goetz F."/>
        </authorList>
    </citation>
    <scope>NUCLEOTIDE SEQUENCE [LARGE SCALE GENOMIC DNA]</scope>
    <source>
        <strain>TM300</strain>
    </source>
</reference>
<protein>
    <recommendedName>
        <fullName evidence="1">Argininosuccinate lyase</fullName>
        <shortName evidence="1">ASAL</shortName>
        <ecNumber evidence="1">4.3.2.1</ecNumber>
    </recommendedName>
    <alternativeName>
        <fullName evidence="1">Arginosuccinase</fullName>
    </alternativeName>
</protein>
<accession>B9DIU3</accession>
<gene>
    <name evidence="1" type="primary">argH</name>
    <name type="ordered locus">Sca_0568</name>
</gene>
<proteinExistence type="inferred from homology"/>
<evidence type="ECO:0000255" key="1">
    <source>
        <dbReference type="HAMAP-Rule" id="MF_00006"/>
    </source>
</evidence>
<dbReference type="EC" id="4.3.2.1" evidence="1"/>
<dbReference type="EMBL" id="AM295250">
    <property type="protein sequence ID" value="CAL27482.1"/>
    <property type="molecule type" value="Genomic_DNA"/>
</dbReference>
<dbReference type="RefSeq" id="WP_015899826.1">
    <property type="nucleotide sequence ID" value="NC_012121.1"/>
</dbReference>
<dbReference type="SMR" id="B9DIU3"/>
<dbReference type="GeneID" id="93795507"/>
<dbReference type="KEGG" id="sca:SCA_0568"/>
<dbReference type="eggNOG" id="COG0165">
    <property type="taxonomic scope" value="Bacteria"/>
</dbReference>
<dbReference type="HOGENOM" id="CLU_027272_2_3_9"/>
<dbReference type="OrthoDB" id="9769623at2"/>
<dbReference type="BioCyc" id="SCAR396513:SCA_RS02905-MONOMER"/>
<dbReference type="UniPathway" id="UPA00068">
    <property type="reaction ID" value="UER00114"/>
</dbReference>
<dbReference type="Proteomes" id="UP000000444">
    <property type="component" value="Chromosome"/>
</dbReference>
<dbReference type="GO" id="GO:0005829">
    <property type="term" value="C:cytosol"/>
    <property type="evidence" value="ECO:0007669"/>
    <property type="project" value="TreeGrafter"/>
</dbReference>
<dbReference type="GO" id="GO:0004056">
    <property type="term" value="F:argininosuccinate lyase activity"/>
    <property type="evidence" value="ECO:0007669"/>
    <property type="project" value="UniProtKB-UniRule"/>
</dbReference>
<dbReference type="GO" id="GO:0042450">
    <property type="term" value="P:arginine biosynthetic process via ornithine"/>
    <property type="evidence" value="ECO:0007669"/>
    <property type="project" value="InterPro"/>
</dbReference>
<dbReference type="GO" id="GO:0006526">
    <property type="term" value="P:L-arginine biosynthetic process"/>
    <property type="evidence" value="ECO:0007669"/>
    <property type="project" value="UniProtKB-UniRule"/>
</dbReference>
<dbReference type="CDD" id="cd01359">
    <property type="entry name" value="Argininosuccinate_lyase"/>
    <property type="match status" value="1"/>
</dbReference>
<dbReference type="FunFam" id="1.10.275.10:FF:000002">
    <property type="entry name" value="Argininosuccinate lyase"/>
    <property type="match status" value="1"/>
</dbReference>
<dbReference type="FunFam" id="1.10.40.30:FF:000001">
    <property type="entry name" value="Argininosuccinate lyase"/>
    <property type="match status" value="1"/>
</dbReference>
<dbReference type="FunFam" id="1.20.200.10:FF:000015">
    <property type="entry name" value="argininosuccinate lyase isoform X2"/>
    <property type="match status" value="1"/>
</dbReference>
<dbReference type="Gene3D" id="1.10.40.30">
    <property type="entry name" value="Fumarase/aspartase (C-terminal domain)"/>
    <property type="match status" value="1"/>
</dbReference>
<dbReference type="Gene3D" id="1.20.200.10">
    <property type="entry name" value="Fumarase/aspartase (Central domain)"/>
    <property type="match status" value="1"/>
</dbReference>
<dbReference type="Gene3D" id="1.10.275.10">
    <property type="entry name" value="Fumarase/aspartase (N-terminal domain)"/>
    <property type="match status" value="1"/>
</dbReference>
<dbReference type="HAMAP" id="MF_00006">
    <property type="entry name" value="Arg_succ_lyase"/>
    <property type="match status" value="1"/>
</dbReference>
<dbReference type="InterPro" id="IPR029419">
    <property type="entry name" value="Arg_succ_lyase_C"/>
</dbReference>
<dbReference type="InterPro" id="IPR009049">
    <property type="entry name" value="Argininosuccinate_lyase"/>
</dbReference>
<dbReference type="InterPro" id="IPR024083">
    <property type="entry name" value="Fumarase/histidase_N"/>
</dbReference>
<dbReference type="InterPro" id="IPR020557">
    <property type="entry name" value="Fumarate_lyase_CS"/>
</dbReference>
<dbReference type="InterPro" id="IPR000362">
    <property type="entry name" value="Fumarate_lyase_fam"/>
</dbReference>
<dbReference type="InterPro" id="IPR022761">
    <property type="entry name" value="Fumarate_lyase_N"/>
</dbReference>
<dbReference type="InterPro" id="IPR008948">
    <property type="entry name" value="L-Aspartase-like"/>
</dbReference>
<dbReference type="NCBIfam" id="TIGR00838">
    <property type="entry name" value="argH"/>
    <property type="match status" value="1"/>
</dbReference>
<dbReference type="PANTHER" id="PTHR43814">
    <property type="entry name" value="ARGININOSUCCINATE LYASE"/>
    <property type="match status" value="1"/>
</dbReference>
<dbReference type="PANTHER" id="PTHR43814:SF1">
    <property type="entry name" value="ARGININOSUCCINATE LYASE"/>
    <property type="match status" value="1"/>
</dbReference>
<dbReference type="Pfam" id="PF14698">
    <property type="entry name" value="ASL_C2"/>
    <property type="match status" value="1"/>
</dbReference>
<dbReference type="Pfam" id="PF00206">
    <property type="entry name" value="Lyase_1"/>
    <property type="match status" value="1"/>
</dbReference>
<dbReference type="PRINTS" id="PR00145">
    <property type="entry name" value="ARGSUCLYASE"/>
</dbReference>
<dbReference type="PRINTS" id="PR00149">
    <property type="entry name" value="FUMRATELYASE"/>
</dbReference>
<dbReference type="SUPFAM" id="SSF48557">
    <property type="entry name" value="L-aspartase-like"/>
    <property type="match status" value="1"/>
</dbReference>
<dbReference type="PROSITE" id="PS00163">
    <property type="entry name" value="FUMARATE_LYASES"/>
    <property type="match status" value="1"/>
</dbReference>
<name>ARLY_STACT</name>